<reference key="1">
    <citation type="submission" date="2005-02" db="EMBL/GenBank/DDBJ databases">
        <title>Prediction of the coding sequences of mouse homologues of KIAA gene. The complete nucleotide sequences of mouse KIAA-homologous cDNAs identified by screening of terminal sequences of cDNA clones randomly sampled from size-fractionated libraries.</title>
        <authorList>
            <person name="Okazaki N."/>
            <person name="Kikuno R.F."/>
            <person name="Ohara R."/>
            <person name="Inamoto S."/>
            <person name="Nagase T."/>
            <person name="Ohara O."/>
            <person name="Koga H."/>
        </authorList>
    </citation>
    <scope>NUCLEOTIDE SEQUENCE [LARGE SCALE MRNA]</scope>
    <source>
        <tissue>Fetal brain</tissue>
    </source>
</reference>
<reference key="2">
    <citation type="journal article" date="2000" name="Mech. Dev.">
        <title>Vertebrate orthologues of the Drosophila region-specific patterning gene teashirt.</title>
        <authorList>
            <person name="Caubit X."/>
            <person name="Core N."/>
            <person name="Boned A."/>
            <person name="Kerridge S."/>
            <person name="Djabali M."/>
            <person name="Fasano L."/>
        </authorList>
    </citation>
    <scope>NUCLEOTIDE SEQUENCE [MRNA] OF 15-1084</scope>
    <source>
        <tissue>Limb bud</tissue>
    </source>
</reference>
<reference key="3">
    <citation type="journal article" date="2004" name="Genome Res.">
        <title>The status, quality, and expansion of the NIH full-length cDNA project: the Mammalian Gene Collection (MGC).</title>
        <authorList>
            <consortium name="The MGC Project Team"/>
        </authorList>
    </citation>
    <scope>NUCLEOTIDE SEQUENCE [LARGE SCALE MRNA] OF 281-1084</scope>
    <source>
        <strain>FVB/N</strain>
        <tissue>Mammary tumor</tissue>
        <tissue>Salivary gland</tissue>
    </source>
</reference>
<reference key="4">
    <citation type="journal article" date="2004" name="Development">
        <title>Three putative murine Teashirt orthologues specify trunk structures in Drosophila in the same way as the Drosophila teashirt gene.</title>
        <authorList>
            <person name="Manfroid I."/>
            <person name="Caubit X."/>
            <person name="Kerridge S."/>
            <person name="Fasano L."/>
        </authorList>
    </citation>
    <scope>POSSIBLE FUNCTION</scope>
</reference>
<reference key="5">
    <citation type="journal article" date="2007" name="Dev. Biol.">
        <title>Tshz1 is required for axial skeleton, soft palate and middle ear development in mice.</title>
        <authorList>
            <person name="Core N."/>
            <person name="Caubit X."/>
            <person name="Metchat A."/>
            <person name="Boned A."/>
            <person name="Djabali M."/>
            <person name="Fasano L."/>
        </authorList>
    </citation>
    <scope>DEVELOPMENTAL STAGE</scope>
    <scope>DISRUPTION PHENOTYPE</scope>
</reference>
<reference key="6">
    <citation type="journal article" date="2009" name="PLoS ONE">
        <title>FE65 binds Teashirt, inhibiting expression of the primate-specific caspase-4.</title>
        <authorList>
            <person name="Kajiwara Y."/>
            <person name="Akram A."/>
            <person name="Katsel P."/>
            <person name="Haroutunian V."/>
            <person name="Schmeidler J."/>
            <person name="Beecham G."/>
            <person name="Haines J.L."/>
            <person name="Pericak-Vance M.A."/>
            <person name="Buxbaum J.D."/>
        </authorList>
    </citation>
    <scope>INTERACTION WITH APBB1</scope>
</reference>
<reference key="7">
    <citation type="journal article" date="2010" name="Nephrol. Dial. Transplant.">
        <title>Analysis of TSHZ2 and TSHZ3 genes in congenital pelvi-ureteric junction obstruction.</title>
        <authorList>
            <person name="Jenkins D."/>
            <person name="Caubit X."/>
            <person name="Dimovski A."/>
            <person name="Matevska N."/>
            <person name="Lye C.M."/>
            <person name="Cabuk F."/>
            <person name="Gucev Z."/>
            <person name="Tasic V."/>
            <person name="Fasano L."/>
            <person name="Woolf A.S."/>
        </authorList>
    </citation>
    <scope>DEVELOPMENTAL STAGE</scope>
</reference>
<dbReference type="EMBL" id="AK220545">
    <property type="protein sequence ID" value="BAD90534.1"/>
    <property type="status" value="ALT_INIT"/>
    <property type="molecule type" value="mRNA"/>
</dbReference>
<dbReference type="EMBL" id="AF191309">
    <property type="protein sequence ID" value="AAF63158.1"/>
    <property type="status" value="ALT_FRAME"/>
    <property type="molecule type" value="mRNA"/>
</dbReference>
<dbReference type="EMBL" id="BC017636">
    <property type="protein sequence ID" value="AAH17636.1"/>
    <property type="molecule type" value="mRNA"/>
</dbReference>
<dbReference type="EMBL" id="BC058264">
    <property type="protein sequence ID" value="AAH58264.1"/>
    <property type="status" value="ALT_INIT"/>
    <property type="molecule type" value="mRNA"/>
</dbReference>
<dbReference type="CCDS" id="CCDS37876.1"/>
<dbReference type="RefSeq" id="NP_001074769.1">
    <property type="nucleotide sequence ID" value="NM_001081300.2"/>
</dbReference>
<dbReference type="RefSeq" id="XP_030106133.1">
    <property type="nucleotide sequence ID" value="XM_030250273.1"/>
</dbReference>
<dbReference type="RefSeq" id="XP_030106134.1">
    <property type="nucleotide sequence ID" value="XM_030250274.2"/>
</dbReference>
<dbReference type="RefSeq" id="XP_030106135.1">
    <property type="nucleotide sequence ID" value="XM_030250275.1"/>
</dbReference>
<dbReference type="SMR" id="Q5DTH5"/>
<dbReference type="BioGRID" id="225914">
    <property type="interactions" value="1"/>
</dbReference>
<dbReference type="FunCoup" id="Q5DTH5">
    <property type="interactions" value="2177"/>
</dbReference>
<dbReference type="STRING" id="10090.ENSMUSP00000089388"/>
<dbReference type="GlyGen" id="Q5DTH5">
    <property type="glycosylation" value="2 sites"/>
</dbReference>
<dbReference type="iPTMnet" id="Q5DTH5"/>
<dbReference type="PhosphoSitePlus" id="Q5DTH5"/>
<dbReference type="jPOST" id="Q5DTH5"/>
<dbReference type="PaxDb" id="10090-ENSMUSP00000089388"/>
<dbReference type="PeptideAtlas" id="Q5DTH5"/>
<dbReference type="ProteomicsDB" id="297661"/>
<dbReference type="Antibodypedia" id="1827">
    <property type="antibodies" value="197 antibodies from 31 providers"/>
</dbReference>
<dbReference type="Ensembl" id="ENSMUST00000060303.10">
    <property type="protein sequence ID" value="ENSMUSP00000089388.6"/>
    <property type="gene ID" value="ENSMUSG00000046982.12"/>
</dbReference>
<dbReference type="GeneID" id="110796"/>
<dbReference type="KEGG" id="mmu:110796"/>
<dbReference type="UCSC" id="uc008ful.1">
    <property type="organism name" value="mouse"/>
</dbReference>
<dbReference type="AGR" id="MGI:1346031"/>
<dbReference type="CTD" id="10194"/>
<dbReference type="MGI" id="MGI:1346031">
    <property type="gene designation" value="Tshz1"/>
</dbReference>
<dbReference type="VEuPathDB" id="HostDB:ENSMUSG00000046982"/>
<dbReference type="eggNOG" id="ENOG502RJS7">
    <property type="taxonomic scope" value="Eukaryota"/>
</dbReference>
<dbReference type="GeneTree" id="ENSGT00950000183051"/>
<dbReference type="HOGENOM" id="CLU_010469_0_0_1"/>
<dbReference type="InParanoid" id="Q5DTH5"/>
<dbReference type="OMA" id="TNQEAGY"/>
<dbReference type="OrthoDB" id="5815793at2759"/>
<dbReference type="PhylomeDB" id="Q5DTH5"/>
<dbReference type="TreeFam" id="TF328447"/>
<dbReference type="BioGRID-ORCS" id="110796">
    <property type="hits" value="1 hit in 77 CRISPR screens"/>
</dbReference>
<dbReference type="ChiTaRS" id="Tshz1">
    <property type="organism name" value="mouse"/>
</dbReference>
<dbReference type="PRO" id="PR:Q5DTH5"/>
<dbReference type="Proteomes" id="UP000000589">
    <property type="component" value="Chromosome 18"/>
</dbReference>
<dbReference type="RNAct" id="Q5DTH5">
    <property type="molecule type" value="protein"/>
</dbReference>
<dbReference type="Bgee" id="ENSMUSG00000046982">
    <property type="expression patterns" value="Expressed in rostral migratory stream and 290 other cell types or tissues"/>
</dbReference>
<dbReference type="ExpressionAtlas" id="Q5DTH5">
    <property type="expression patterns" value="baseline and differential"/>
</dbReference>
<dbReference type="GO" id="GO:0005634">
    <property type="term" value="C:nucleus"/>
    <property type="evidence" value="ECO:0007669"/>
    <property type="project" value="UniProtKB-SubCell"/>
</dbReference>
<dbReference type="GO" id="GO:0003677">
    <property type="term" value="F:DNA binding"/>
    <property type="evidence" value="ECO:0007669"/>
    <property type="project" value="UniProtKB-KW"/>
</dbReference>
<dbReference type="GO" id="GO:0008270">
    <property type="term" value="F:zinc ion binding"/>
    <property type="evidence" value="ECO:0007669"/>
    <property type="project" value="UniProtKB-KW"/>
</dbReference>
<dbReference type="GO" id="GO:0009952">
    <property type="term" value="P:anterior/posterior pattern specification"/>
    <property type="evidence" value="ECO:0000315"/>
    <property type="project" value="MGI"/>
</dbReference>
<dbReference type="GO" id="GO:0042474">
    <property type="term" value="P:middle ear morphogenesis"/>
    <property type="evidence" value="ECO:0000315"/>
    <property type="project" value="MGI"/>
</dbReference>
<dbReference type="GO" id="GO:0010468">
    <property type="term" value="P:regulation of gene expression"/>
    <property type="evidence" value="ECO:0007669"/>
    <property type="project" value="InterPro"/>
</dbReference>
<dbReference type="GO" id="GO:0060023">
    <property type="term" value="P:soft palate development"/>
    <property type="evidence" value="ECO:0000315"/>
    <property type="project" value="MGI"/>
</dbReference>
<dbReference type="CDD" id="cd00086">
    <property type="entry name" value="homeodomain"/>
    <property type="match status" value="1"/>
</dbReference>
<dbReference type="Gene3D" id="3.30.160.60">
    <property type="entry name" value="Classic Zinc Finger"/>
    <property type="match status" value="2"/>
</dbReference>
<dbReference type="InterPro" id="IPR001356">
    <property type="entry name" value="HD"/>
</dbReference>
<dbReference type="InterPro" id="IPR027008">
    <property type="entry name" value="Teashirt_fam"/>
</dbReference>
<dbReference type="InterPro" id="IPR013087">
    <property type="entry name" value="Znf_C2H2_type"/>
</dbReference>
<dbReference type="PANTHER" id="PTHR12487:SF6">
    <property type="entry name" value="TEASHIRT HOMOLOG 1"/>
    <property type="match status" value="1"/>
</dbReference>
<dbReference type="PANTHER" id="PTHR12487">
    <property type="entry name" value="TEASHIRT-RELATED"/>
    <property type="match status" value="1"/>
</dbReference>
<dbReference type="SMART" id="SM00389">
    <property type="entry name" value="HOX"/>
    <property type="match status" value="1"/>
</dbReference>
<dbReference type="SMART" id="SM00355">
    <property type="entry name" value="ZnF_C2H2"/>
    <property type="match status" value="5"/>
</dbReference>
<dbReference type="PROSITE" id="PS00028">
    <property type="entry name" value="ZINC_FINGER_C2H2_1"/>
    <property type="match status" value="4"/>
</dbReference>
<dbReference type="PROSITE" id="PS50157">
    <property type="entry name" value="ZINC_FINGER_C2H2_2"/>
    <property type="match status" value="3"/>
</dbReference>
<comment type="function">
    <text evidence="7">Probable transcriptional regulator involved in developmental processes. May act as a transcriptional repressor (Potential).</text>
</comment>
<comment type="subunit">
    <text evidence="5">Interacts (via homeobox domain) with APBB1 (via PID domain 1).</text>
</comment>
<comment type="subcellular location">
    <subcellularLocation>
        <location evidence="7">Nucleus</location>
    </subcellularLocation>
</comment>
<comment type="developmental stage">
    <text evidence="4 6">From 12.5 dpc, expressed in the mesenchyme of the developing middle ear, within areas surrounding the condensing malleus and tympanic ring and on both sides of the external acoustic meatus. At 12.5 dpc, borders and surrounds the future cartilages, but excluded from cartilaginous condensations. Not detected in mesenchymal cells in proximal ureters at 14 dpc.</text>
</comment>
<comment type="disruption phenotype">
    <text evidence="4">Normal Mendelian ratio at birth, but none of the mutant animals survive beyond P0. Newborn mutant mice exhibit a strong defect of the soft palate, vertebral malformations in the cervical and thoracic regions of the axial skeleton and malformations in the middle ear components.</text>
</comment>
<comment type="similarity">
    <text evidence="7">Belongs to the teashirt C2H2-type zinc-finger protein family.</text>
</comment>
<comment type="sequence caution" evidence="7">
    <conflict type="frameshift">
        <sequence resource="EMBL-CDS" id="AAF63158"/>
    </conflict>
</comment>
<comment type="sequence caution" evidence="7">
    <conflict type="erroneous initiation">
        <sequence resource="EMBL-CDS" id="AAH58264"/>
    </conflict>
    <text>Truncated N-terminus.</text>
</comment>
<comment type="sequence caution" evidence="7">
    <conflict type="erroneous initiation">
        <sequence resource="EMBL-CDS" id="BAD90534"/>
    </conflict>
    <text>Extended N-terminus.</text>
</comment>
<feature type="chain" id="PRO_0000047063" description="Teashirt homolog 1">
    <location>
        <begin position="1"/>
        <end position="1084"/>
    </location>
</feature>
<feature type="zinc finger region" description="C2H2-type 1" evidence="2">
    <location>
        <begin position="246"/>
        <end position="270"/>
    </location>
</feature>
<feature type="zinc finger region" description="C2H2-type 2" evidence="2">
    <location>
        <begin position="307"/>
        <end position="331"/>
    </location>
</feature>
<feature type="zinc finger region" description="C2H2-type 3; atypical" evidence="2">
    <location>
        <begin position="416"/>
        <end position="440"/>
    </location>
</feature>
<feature type="DNA-binding region" description="Homeobox; atypical">
    <location>
        <begin position="891"/>
        <end position="961"/>
    </location>
</feature>
<feature type="zinc finger region" description="C2H2-type 4" evidence="2">
    <location>
        <begin position="976"/>
        <end position="998"/>
    </location>
</feature>
<feature type="zinc finger region" description="C2H2-type 5" evidence="2">
    <location>
        <begin position="1044"/>
        <end position="1067"/>
    </location>
</feature>
<feature type="region of interest" description="Disordered" evidence="3">
    <location>
        <begin position="49"/>
        <end position="108"/>
    </location>
</feature>
<feature type="region of interest" description="Disordered" evidence="3">
    <location>
        <begin position="140"/>
        <end position="167"/>
    </location>
</feature>
<feature type="region of interest" description="Disordered" evidence="3">
    <location>
        <begin position="269"/>
        <end position="298"/>
    </location>
</feature>
<feature type="region of interest" description="Disordered" evidence="3">
    <location>
        <begin position="467"/>
        <end position="534"/>
    </location>
</feature>
<feature type="region of interest" description="Disordered" evidence="3">
    <location>
        <begin position="653"/>
        <end position="728"/>
    </location>
</feature>
<feature type="region of interest" description="Disordered" evidence="3">
    <location>
        <begin position="855"/>
        <end position="879"/>
    </location>
</feature>
<feature type="compositionally biased region" description="Polar residues" evidence="3">
    <location>
        <begin position="57"/>
        <end position="71"/>
    </location>
</feature>
<feature type="compositionally biased region" description="Polar residues" evidence="3">
    <location>
        <begin position="140"/>
        <end position="152"/>
    </location>
</feature>
<feature type="compositionally biased region" description="Basic and acidic residues" evidence="3">
    <location>
        <begin position="269"/>
        <end position="284"/>
    </location>
</feature>
<feature type="compositionally biased region" description="Basic and acidic residues" evidence="3">
    <location>
        <begin position="496"/>
        <end position="534"/>
    </location>
</feature>
<feature type="compositionally biased region" description="Basic and acidic residues" evidence="3">
    <location>
        <begin position="653"/>
        <end position="671"/>
    </location>
</feature>
<feature type="compositionally biased region" description="Basic and acidic residues" evidence="3">
    <location>
        <begin position="681"/>
        <end position="714"/>
    </location>
</feature>
<feature type="compositionally biased region" description="Polar residues" evidence="3">
    <location>
        <begin position="859"/>
        <end position="868"/>
    </location>
</feature>
<feature type="modified residue" description="Phosphoserine" evidence="1">
    <location>
        <position position="771"/>
    </location>
</feature>
<feature type="sequence conflict" description="In Ref. 2; AAF63158." evidence="7" ref="2">
    <original>A</original>
    <variation>S</variation>
    <location>
        <position position="31"/>
    </location>
</feature>
<feature type="sequence conflict" description="In Ref. 2; AAF63158." evidence="7" ref="2">
    <original>N</original>
    <variation>S</variation>
    <location>
        <position position="140"/>
    </location>
</feature>
<feature type="sequence conflict" description="In Ref. 2; AAF63158." evidence="7" ref="2">
    <original>G</original>
    <variation>A</variation>
    <location>
        <position position="1034"/>
    </location>
</feature>
<evidence type="ECO:0000250" key="1">
    <source>
        <dbReference type="UniProtKB" id="Q6ZSZ6"/>
    </source>
</evidence>
<evidence type="ECO:0000255" key="2">
    <source>
        <dbReference type="PROSITE-ProRule" id="PRU00042"/>
    </source>
</evidence>
<evidence type="ECO:0000256" key="3">
    <source>
        <dbReference type="SAM" id="MobiDB-lite"/>
    </source>
</evidence>
<evidence type="ECO:0000269" key="4">
    <source>
    </source>
</evidence>
<evidence type="ECO:0000269" key="5">
    <source>
    </source>
</evidence>
<evidence type="ECO:0000269" key="6">
    <source>
    </source>
</evidence>
<evidence type="ECO:0000305" key="7"/>
<sequence>MPRRKQQAPRRSAAYVPEEELKAAEIDEEHAEDGGLSLDIQESEFACNEETEIKEAQSYQNSPVSTATNQDAGYGSPFSEGSDQLAHFKSSSSREEKEESQCPDSVSYPQDSLAQIKAVYANLFSESCWSSLALDLKKSNSATSNNDASQKESSTPTPTPPTSTASTACTTATTAITSCSTSTSHSSTTSNSSSSGYDWHQAALAKTLQQTSSYGLLPEPSLFSTVQLYRQNNKLYGSVFTGASKFRCKDCSAAYDTLVELTVHMNETGHYRDDNRDKDSEKTKRWSKPRKRSLMEMEGKEDAQKVLKCMYCGHSFESLQDLSVHMIKTKHYQKVPLKEPVPAITKLVPSTKKRALQDLASPCSPEPTGVATEVALSESAKDQKTANPYVTPNNRYGYQNGASYTWQFEARKAQILKCMECGSSHDTLQQLTAHMMVTGHFLKVTTSASKKGKQLVLDPVVEEKIQSIPLPPTTHTRLPASSIKKQPDSPAGSVASEEKKEPEKEKEKEKAPPAAGDAERKIKEETEDATEKFEPTALYQYLREEDLDDSPKGGVDILKSLENTVSTAISKAQNGAPSWGGYPSIHAAYQLPGTVKPLQSAVQSVQIQPSYASSVKSLSSTEHNALLHSPGSLTPPPHKSNVSAMEELVEKVTGKVSIKKEERPTEKEKSSPVKAISPVAKENKDLPKTEETGSKPQKKGSDSETGKAKKESTLDAHTPNGTEPLKAKVTNGCGHLGIITDHSPEPSFINPLSALQSIMNTHLGKVSKPVSPSLDPLAMLYKISNSMLDKPVYPTTPAKQADAIDRYYYENSDQPIDLTKSKNKPLVSGVADAVSSPLRESALMDISDMVKNLTGRLTPKSSTPSTVSEKSDADGSSFEEALDELSPVHKRKGRQSNWNPQHLLILQAQFASSLRETAEGKYIMSDLGPQERVHISKFTGLSMTTISHWLANVKYQLRRTGGTKFLKNLDTGHPVFFCNDCASQFRTASTYVSHLETHLGFSLKDLSKLPLSQIQEQQSVVSKALTNKTLGPLGSSEEDLGSTFQCKLCNRTFASKHAVKLHLSKTHGKSPEDHLIYVTELEKQ</sequence>
<name>TSH1_MOUSE</name>
<keyword id="KW-0217">Developmental protein</keyword>
<keyword id="KW-0238">DNA-binding</keyword>
<keyword id="KW-0371">Homeobox</keyword>
<keyword id="KW-0479">Metal-binding</keyword>
<keyword id="KW-0539">Nucleus</keyword>
<keyword id="KW-0597">Phosphoprotein</keyword>
<keyword id="KW-1185">Reference proteome</keyword>
<keyword id="KW-0677">Repeat</keyword>
<keyword id="KW-0678">Repressor</keyword>
<keyword id="KW-0804">Transcription</keyword>
<keyword id="KW-0805">Transcription regulation</keyword>
<keyword id="KW-0862">Zinc</keyword>
<keyword id="KW-0863">Zinc-finger</keyword>
<proteinExistence type="evidence at protein level"/>
<protein>
    <recommendedName>
        <fullName>Teashirt homolog 1</fullName>
    </recommendedName>
    <alternativeName>
        <fullName>Serologically defined colon cancer antigen 3 homolog</fullName>
    </alternativeName>
</protein>
<gene>
    <name type="primary">Tshz1</name>
    <name type="synonym">Kiaa4206</name>
    <name type="synonym">Sdccag33</name>
    <name type="synonym">Tsh1</name>
</gene>
<organism>
    <name type="scientific">Mus musculus</name>
    <name type="common">Mouse</name>
    <dbReference type="NCBI Taxonomy" id="10090"/>
    <lineage>
        <taxon>Eukaryota</taxon>
        <taxon>Metazoa</taxon>
        <taxon>Chordata</taxon>
        <taxon>Craniata</taxon>
        <taxon>Vertebrata</taxon>
        <taxon>Euteleostomi</taxon>
        <taxon>Mammalia</taxon>
        <taxon>Eutheria</taxon>
        <taxon>Euarchontoglires</taxon>
        <taxon>Glires</taxon>
        <taxon>Rodentia</taxon>
        <taxon>Myomorpha</taxon>
        <taxon>Muroidea</taxon>
        <taxon>Muridae</taxon>
        <taxon>Murinae</taxon>
        <taxon>Mus</taxon>
        <taxon>Mus</taxon>
    </lineage>
</organism>
<accession>Q5DTH5</accession>
<accession>Q6PE60</accession>
<accession>Q8VD19</accession>
<accession>Q9JLD5</accession>